<proteinExistence type="inferred from homology"/>
<reference key="1">
    <citation type="submission" date="2008-04" db="EMBL/GenBank/DDBJ databases">
        <title>Complete sequence of chromosome of Methylobacterium populi BJ001.</title>
        <authorList>
            <consortium name="US DOE Joint Genome Institute"/>
            <person name="Copeland A."/>
            <person name="Lucas S."/>
            <person name="Lapidus A."/>
            <person name="Glavina del Rio T."/>
            <person name="Dalin E."/>
            <person name="Tice H."/>
            <person name="Bruce D."/>
            <person name="Goodwin L."/>
            <person name="Pitluck S."/>
            <person name="Chertkov O."/>
            <person name="Brettin T."/>
            <person name="Detter J.C."/>
            <person name="Han C."/>
            <person name="Kuske C.R."/>
            <person name="Schmutz J."/>
            <person name="Larimer F."/>
            <person name="Land M."/>
            <person name="Hauser L."/>
            <person name="Kyrpides N."/>
            <person name="Mikhailova N."/>
            <person name="Marx C."/>
            <person name="Richardson P."/>
        </authorList>
    </citation>
    <scope>NUCLEOTIDE SEQUENCE [LARGE SCALE GENOMIC DNA]</scope>
    <source>
        <strain>ATCC BAA-705 / NCIMB 13946 / BJ001</strain>
    </source>
</reference>
<protein>
    <recommendedName>
        <fullName evidence="1">Small ribosomal subunit protein bS6</fullName>
    </recommendedName>
    <alternativeName>
        <fullName evidence="3">30S ribosomal protein S6</fullName>
    </alternativeName>
</protein>
<sequence length="151" mass="17370">MPLYEHVFLARQDVTAQQVETMVETYKGVIETGGGTIEKIESWGVKSLAYRIKKNRKAHFTLLNISAPPAALAEMERQMQISEDVLRFMTVRVEQLEAEPSAMMQKRDRDDRKDRDRGDRPRRRDDDFGGGDRGDRGDRGDRPERNFGGEN</sequence>
<accession>B1ZFQ8</accession>
<dbReference type="EMBL" id="CP001029">
    <property type="protein sequence ID" value="ACB82517.1"/>
    <property type="molecule type" value="Genomic_DNA"/>
</dbReference>
<dbReference type="RefSeq" id="WP_012456123.1">
    <property type="nucleotide sequence ID" value="NC_010725.1"/>
</dbReference>
<dbReference type="SMR" id="B1ZFQ8"/>
<dbReference type="STRING" id="441620.Mpop_4417"/>
<dbReference type="KEGG" id="mpo:Mpop_4417"/>
<dbReference type="eggNOG" id="COG0360">
    <property type="taxonomic scope" value="Bacteria"/>
</dbReference>
<dbReference type="HOGENOM" id="CLU_113441_2_0_5"/>
<dbReference type="OrthoDB" id="9812702at2"/>
<dbReference type="Proteomes" id="UP000007136">
    <property type="component" value="Chromosome"/>
</dbReference>
<dbReference type="GO" id="GO:0022627">
    <property type="term" value="C:cytosolic small ribosomal subunit"/>
    <property type="evidence" value="ECO:0007669"/>
    <property type="project" value="TreeGrafter"/>
</dbReference>
<dbReference type="GO" id="GO:0070181">
    <property type="term" value="F:small ribosomal subunit rRNA binding"/>
    <property type="evidence" value="ECO:0007669"/>
    <property type="project" value="TreeGrafter"/>
</dbReference>
<dbReference type="GO" id="GO:0003735">
    <property type="term" value="F:structural constituent of ribosome"/>
    <property type="evidence" value="ECO:0007669"/>
    <property type="project" value="InterPro"/>
</dbReference>
<dbReference type="GO" id="GO:0006412">
    <property type="term" value="P:translation"/>
    <property type="evidence" value="ECO:0007669"/>
    <property type="project" value="UniProtKB-UniRule"/>
</dbReference>
<dbReference type="CDD" id="cd00473">
    <property type="entry name" value="bS6"/>
    <property type="match status" value="1"/>
</dbReference>
<dbReference type="Gene3D" id="3.30.70.60">
    <property type="match status" value="1"/>
</dbReference>
<dbReference type="HAMAP" id="MF_00360">
    <property type="entry name" value="Ribosomal_bS6"/>
    <property type="match status" value="1"/>
</dbReference>
<dbReference type="InterPro" id="IPR000529">
    <property type="entry name" value="Ribosomal_bS6"/>
</dbReference>
<dbReference type="InterPro" id="IPR035980">
    <property type="entry name" value="Ribosomal_bS6_sf"/>
</dbReference>
<dbReference type="InterPro" id="IPR020814">
    <property type="entry name" value="Ribosomal_S6_plastid/chlpt"/>
</dbReference>
<dbReference type="InterPro" id="IPR014717">
    <property type="entry name" value="Transl_elong_EF1B/ribsomal_bS6"/>
</dbReference>
<dbReference type="NCBIfam" id="TIGR00166">
    <property type="entry name" value="S6"/>
    <property type="match status" value="1"/>
</dbReference>
<dbReference type="PANTHER" id="PTHR21011">
    <property type="entry name" value="MITOCHONDRIAL 28S RIBOSOMAL PROTEIN S6"/>
    <property type="match status" value="1"/>
</dbReference>
<dbReference type="PANTHER" id="PTHR21011:SF1">
    <property type="entry name" value="SMALL RIBOSOMAL SUBUNIT PROTEIN BS6M"/>
    <property type="match status" value="1"/>
</dbReference>
<dbReference type="Pfam" id="PF01250">
    <property type="entry name" value="Ribosomal_S6"/>
    <property type="match status" value="1"/>
</dbReference>
<dbReference type="SUPFAM" id="SSF54995">
    <property type="entry name" value="Ribosomal protein S6"/>
    <property type="match status" value="1"/>
</dbReference>
<evidence type="ECO:0000255" key="1">
    <source>
        <dbReference type="HAMAP-Rule" id="MF_00360"/>
    </source>
</evidence>
<evidence type="ECO:0000256" key="2">
    <source>
        <dbReference type="SAM" id="MobiDB-lite"/>
    </source>
</evidence>
<evidence type="ECO:0000305" key="3"/>
<feature type="chain" id="PRO_1000120772" description="Small ribosomal subunit protein bS6">
    <location>
        <begin position="1"/>
        <end position="151"/>
    </location>
</feature>
<feature type="region of interest" description="Disordered" evidence="2">
    <location>
        <begin position="97"/>
        <end position="151"/>
    </location>
</feature>
<feature type="compositionally biased region" description="Basic and acidic residues" evidence="2">
    <location>
        <begin position="105"/>
        <end position="151"/>
    </location>
</feature>
<comment type="function">
    <text evidence="1">Binds together with bS18 to 16S ribosomal RNA.</text>
</comment>
<comment type="similarity">
    <text evidence="1">Belongs to the bacterial ribosomal protein bS6 family.</text>
</comment>
<organism>
    <name type="scientific">Methylorubrum populi (strain ATCC BAA-705 / NCIMB 13946 / BJ001)</name>
    <name type="common">Methylobacterium populi</name>
    <dbReference type="NCBI Taxonomy" id="441620"/>
    <lineage>
        <taxon>Bacteria</taxon>
        <taxon>Pseudomonadati</taxon>
        <taxon>Pseudomonadota</taxon>
        <taxon>Alphaproteobacteria</taxon>
        <taxon>Hyphomicrobiales</taxon>
        <taxon>Methylobacteriaceae</taxon>
        <taxon>Methylorubrum</taxon>
    </lineage>
</organism>
<name>RS6_METPB</name>
<keyword id="KW-0687">Ribonucleoprotein</keyword>
<keyword id="KW-0689">Ribosomal protein</keyword>
<keyword id="KW-0694">RNA-binding</keyword>
<keyword id="KW-0699">rRNA-binding</keyword>
<gene>
    <name evidence="1" type="primary">rpsF</name>
    <name type="ordered locus">Mpop_4417</name>
</gene>